<organism>
    <name type="scientific">Methanopyrus kandleri (strain AV19 / DSM 6324 / JCM 9639 / NBRC 100938)</name>
    <dbReference type="NCBI Taxonomy" id="190192"/>
    <lineage>
        <taxon>Archaea</taxon>
        <taxon>Methanobacteriati</taxon>
        <taxon>Methanobacteriota</taxon>
        <taxon>Methanomada group</taxon>
        <taxon>Methanopyri</taxon>
        <taxon>Methanopyrales</taxon>
        <taxon>Methanopyraceae</taxon>
        <taxon>Methanopyrus</taxon>
    </lineage>
</organism>
<reference key="1">
    <citation type="journal article" date="2002" name="Proc. Natl. Acad. Sci. U.S.A.">
        <title>The complete genome of hyperthermophile Methanopyrus kandleri AV19 and monophyly of archaeal methanogens.</title>
        <authorList>
            <person name="Slesarev A.I."/>
            <person name="Mezhevaya K.V."/>
            <person name="Makarova K.S."/>
            <person name="Polushin N.N."/>
            <person name="Shcherbinina O.V."/>
            <person name="Shakhova V.V."/>
            <person name="Belova G.I."/>
            <person name="Aravind L."/>
            <person name="Natale D.A."/>
            <person name="Rogozin I.B."/>
            <person name="Tatusov R.L."/>
            <person name="Wolf Y.I."/>
            <person name="Stetter K.O."/>
            <person name="Malykh A.G."/>
            <person name="Koonin E.V."/>
            <person name="Kozyavkin S.A."/>
        </authorList>
    </citation>
    <scope>NUCLEOTIDE SEQUENCE [LARGE SCALE GENOMIC DNA]</scope>
    <source>
        <strain>AV19 / DSM 6324 / JCM 9639 / NBRC 100938</strain>
    </source>
</reference>
<keyword id="KW-0028">Amino-acid biosynthesis</keyword>
<keyword id="KW-0057">Aromatic amino acid biosynthesis</keyword>
<keyword id="KW-0274">FAD</keyword>
<keyword id="KW-0285">Flavoprotein</keyword>
<keyword id="KW-0288">FMN</keyword>
<keyword id="KW-0456">Lyase</keyword>
<keyword id="KW-0521">NADP</keyword>
<keyword id="KW-1185">Reference proteome</keyword>
<dbReference type="EC" id="4.2.3.5" evidence="1"/>
<dbReference type="EMBL" id="AE009439">
    <property type="protein sequence ID" value="AAM01846.1"/>
    <property type="molecule type" value="Genomic_DNA"/>
</dbReference>
<dbReference type="RefSeq" id="WP_011019001.1">
    <property type="nucleotide sequence ID" value="NC_003551.1"/>
</dbReference>
<dbReference type="SMR" id="Q8TXN1"/>
<dbReference type="FunCoup" id="Q8TXN1">
    <property type="interactions" value="145"/>
</dbReference>
<dbReference type="STRING" id="190192.MK0631"/>
<dbReference type="PaxDb" id="190192-MK0631"/>
<dbReference type="EnsemblBacteria" id="AAM01846">
    <property type="protein sequence ID" value="AAM01846"/>
    <property type="gene ID" value="MK0631"/>
</dbReference>
<dbReference type="GeneID" id="1476732"/>
<dbReference type="KEGG" id="mka:MK0631"/>
<dbReference type="PATRIC" id="fig|190192.8.peg.670"/>
<dbReference type="HOGENOM" id="CLU_034547_0_2_2"/>
<dbReference type="InParanoid" id="Q8TXN1"/>
<dbReference type="OrthoDB" id="33049at2157"/>
<dbReference type="UniPathway" id="UPA00053">
    <property type="reaction ID" value="UER00090"/>
</dbReference>
<dbReference type="Proteomes" id="UP000001826">
    <property type="component" value="Chromosome"/>
</dbReference>
<dbReference type="GO" id="GO:0005829">
    <property type="term" value="C:cytosol"/>
    <property type="evidence" value="ECO:0007669"/>
    <property type="project" value="TreeGrafter"/>
</dbReference>
<dbReference type="GO" id="GO:0004107">
    <property type="term" value="F:chorismate synthase activity"/>
    <property type="evidence" value="ECO:0007669"/>
    <property type="project" value="UniProtKB-UniRule"/>
</dbReference>
<dbReference type="GO" id="GO:0010181">
    <property type="term" value="F:FMN binding"/>
    <property type="evidence" value="ECO:0007669"/>
    <property type="project" value="TreeGrafter"/>
</dbReference>
<dbReference type="GO" id="GO:0008652">
    <property type="term" value="P:amino acid biosynthetic process"/>
    <property type="evidence" value="ECO:0007669"/>
    <property type="project" value="UniProtKB-KW"/>
</dbReference>
<dbReference type="GO" id="GO:0009073">
    <property type="term" value="P:aromatic amino acid family biosynthetic process"/>
    <property type="evidence" value="ECO:0007669"/>
    <property type="project" value="UniProtKB-KW"/>
</dbReference>
<dbReference type="GO" id="GO:0009423">
    <property type="term" value="P:chorismate biosynthetic process"/>
    <property type="evidence" value="ECO:0007669"/>
    <property type="project" value="UniProtKB-UniRule"/>
</dbReference>
<dbReference type="CDD" id="cd07304">
    <property type="entry name" value="Chorismate_synthase"/>
    <property type="match status" value="1"/>
</dbReference>
<dbReference type="FunFam" id="3.60.150.10:FF:000002">
    <property type="entry name" value="Chorismate synthase"/>
    <property type="match status" value="1"/>
</dbReference>
<dbReference type="Gene3D" id="3.60.150.10">
    <property type="entry name" value="Chorismate synthase AroC"/>
    <property type="match status" value="1"/>
</dbReference>
<dbReference type="HAMAP" id="MF_00300">
    <property type="entry name" value="Chorismate_synth"/>
    <property type="match status" value="1"/>
</dbReference>
<dbReference type="InterPro" id="IPR000453">
    <property type="entry name" value="Chorismate_synth"/>
</dbReference>
<dbReference type="InterPro" id="IPR035904">
    <property type="entry name" value="Chorismate_synth_AroC_sf"/>
</dbReference>
<dbReference type="InterPro" id="IPR020541">
    <property type="entry name" value="Chorismate_synthase_CS"/>
</dbReference>
<dbReference type="NCBIfam" id="TIGR00033">
    <property type="entry name" value="aroC"/>
    <property type="match status" value="1"/>
</dbReference>
<dbReference type="NCBIfam" id="NF003793">
    <property type="entry name" value="PRK05382.1"/>
    <property type="match status" value="1"/>
</dbReference>
<dbReference type="PANTHER" id="PTHR21085">
    <property type="entry name" value="CHORISMATE SYNTHASE"/>
    <property type="match status" value="1"/>
</dbReference>
<dbReference type="PANTHER" id="PTHR21085:SF0">
    <property type="entry name" value="CHORISMATE SYNTHASE"/>
    <property type="match status" value="1"/>
</dbReference>
<dbReference type="Pfam" id="PF01264">
    <property type="entry name" value="Chorismate_synt"/>
    <property type="match status" value="1"/>
</dbReference>
<dbReference type="PIRSF" id="PIRSF001456">
    <property type="entry name" value="Chorismate_synth"/>
    <property type="match status" value="1"/>
</dbReference>
<dbReference type="SUPFAM" id="SSF103263">
    <property type="entry name" value="Chorismate synthase, AroC"/>
    <property type="match status" value="1"/>
</dbReference>
<dbReference type="PROSITE" id="PS00787">
    <property type="entry name" value="CHORISMATE_SYNTHASE_1"/>
    <property type="match status" value="1"/>
</dbReference>
<dbReference type="PROSITE" id="PS00788">
    <property type="entry name" value="CHORISMATE_SYNTHASE_2"/>
    <property type="match status" value="1"/>
</dbReference>
<dbReference type="PROSITE" id="PS00789">
    <property type="entry name" value="CHORISMATE_SYNTHASE_3"/>
    <property type="match status" value="1"/>
</dbReference>
<accession>Q8TXN1</accession>
<proteinExistence type="inferred from homology"/>
<sequence>MNTLGRLFRVTTWGESHGPALGAVVDGCPAGLPLSEDDVQRELDRRRPGQSGVSTPRSERDRVEILSGVHEGRTLGTPISMIVWNEDVDSSKYEPIRTRPRPGHADVTYRWKYGHVDYRGGGRASGRTTVGIVMGGAVAKKLLREAPSNDPLGIEIVGHVVRVGSVEADPGDLSAEEIMQYAESNPVRCADPDAAEEMLGEIERARENGDSVGGTIEVIAENVPPGLGDPVFGRLDGELAGALMNIPAVKAVEVGSGVRCSEMHGSEHNDPIWWDGHPVVDGDNSGGVLGGISHGGRLVVRVHVKPTPSVSVPQRTVDLESEEEVEIEVEGRHDPCICPRAVPVAESVVAIVLADAVLRAGYVNPDSVELPAASVEDRWRTLKRHL</sequence>
<comment type="function">
    <text evidence="1">Catalyzes the anti-1,4-elimination of the C-3 phosphate and the C-6 proR hydrogen from 5-enolpyruvylshikimate-3-phosphate (EPSP) to yield chorismate, which is the branch point compound that serves as the starting substrate for the three terminal pathways of aromatic amino acid biosynthesis. This reaction introduces a second double bond into the aromatic ring system.</text>
</comment>
<comment type="catalytic activity">
    <reaction evidence="1">
        <text>5-O-(1-carboxyvinyl)-3-phosphoshikimate = chorismate + phosphate</text>
        <dbReference type="Rhea" id="RHEA:21020"/>
        <dbReference type="ChEBI" id="CHEBI:29748"/>
        <dbReference type="ChEBI" id="CHEBI:43474"/>
        <dbReference type="ChEBI" id="CHEBI:57701"/>
        <dbReference type="EC" id="4.2.3.5"/>
    </reaction>
</comment>
<comment type="cofactor">
    <cofactor evidence="1">
        <name>FMNH2</name>
        <dbReference type="ChEBI" id="CHEBI:57618"/>
    </cofactor>
    <text evidence="1">Reduced FMN (FMNH(2)).</text>
</comment>
<comment type="pathway">
    <text evidence="1">Metabolic intermediate biosynthesis; chorismate biosynthesis; chorismate from D-erythrose 4-phosphate and phosphoenolpyruvate: step 7/7.</text>
</comment>
<comment type="similarity">
    <text evidence="1">Belongs to the chorismate synthase family.</text>
</comment>
<name>AROC_METKA</name>
<feature type="chain" id="PRO_0000140691" description="Chorismate synthase">
    <location>
        <begin position="1"/>
        <end position="386"/>
    </location>
</feature>
<feature type="region of interest" description="Disordered" evidence="2">
    <location>
        <begin position="32"/>
        <end position="60"/>
    </location>
</feature>
<feature type="compositionally biased region" description="Basic and acidic residues" evidence="2">
    <location>
        <begin position="38"/>
        <end position="47"/>
    </location>
</feature>
<feature type="binding site" evidence="1">
    <location>
        <position position="46"/>
    </location>
    <ligand>
        <name>NADP(+)</name>
        <dbReference type="ChEBI" id="CHEBI:58349"/>
    </ligand>
</feature>
<feature type="binding site" evidence="1">
    <location>
        <begin position="123"/>
        <end position="125"/>
    </location>
    <ligand>
        <name>FMN</name>
        <dbReference type="ChEBI" id="CHEBI:58210"/>
    </ligand>
</feature>
<feature type="binding site" evidence="1">
    <location>
        <position position="290"/>
    </location>
    <ligand>
        <name>FMN</name>
        <dbReference type="ChEBI" id="CHEBI:58210"/>
    </ligand>
</feature>
<feature type="binding site" evidence="1">
    <location>
        <begin position="305"/>
        <end position="309"/>
    </location>
    <ligand>
        <name>FMN</name>
        <dbReference type="ChEBI" id="CHEBI:58210"/>
    </ligand>
</feature>
<feature type="binding site" evidence="1">
    <location>
        <position position="332"/>
    </location>
    <ligand>
        <name>FMN</name>
        <dbReference type="ChEBI" id="CHEBI:58210"/>
    </ligand>
</feature>
<gene>
    <name evidence="1" type="primary">aroC</name>
    <name type="ordered locus">MK0631</name>
</gene>
<protein>
    <recommendedName>
        <fullName evidence="1">Chorismate synthase</fullName>
        <shortName evidence="1">CS</shortName>
        <ecNumber evidence="1">4.2.3.5</ecNumber>
    </recommendedName>
    <alternativeName>
        <fullName evidence="1">5-enolpyruvylshikimate-3-phosphate phospholyase</fullName>
    </alternativeName>
</protein>
<evidence type="ECO:0000255" key="1">
    <source>
        <dbReference type="HAMAP-Rule" id="MF_00300"/>
    </source>
</evidence>
<evidence type="ECO:0000256" key="2">
    <source>
        <dbReference type="SAM" id="MobiDB-lite"/>
    </source>
</evidence>